<protein>
    <recommendedName>
        <fullName evidence="1">Small ribosomal subunit protein uS15</fullName>
    </recommendedName>
    <alternativeName>
        <fullName evidence="2">30S ribosomal protein S15</fullName>
    </alternativeName>
</protein>
<dbReference type="EMBL" id="AE017198">
    <property type="protein sequence ID" value="AAS08828.1"/>
    <property type="molecule type" value="Genomic_DNA"/>
</dbReference>
<dbReference type="EMBL" id="AY372049">
    <property type="protein sequence ID" value="AAR25451.1"/>
    <property type="molecule type" value="Genomic_DNA"/>
</dbReference>
<dbReference type="RefSeq" id="WP_004894315.1">
    <property type="nucleotide sequence ID" value="NC_005362.1"/>
</dbReference>
<dbReference type="SMR" id="Q74JU9"/>
<dbReference type="GeneID" id="83570559"/>
<dbReference type="KEGG" id="ljo:LJ_1006"/>
<dbReference type="eggNOG" id="COG0184">
    <property type="taxonomic scope" value="Bacteria"/>
</dbReference>
<dbReference type="HOGENOM" id="CLU_148518_0_0_9"/>
<dbReference type="Proteomes" id="UP000000581">
    <property type="component" value="Chromosome"/>
</dbReference>
<dbReference type="GO" id="GO:0022627">
    <property type="term" value="C:cytosolic small ribosomal subunit"/>
    <property type="evidence" value="ECO:0007669"/>
    <property type="project" value="TreeGrafter"/>
</dbReference>
<dbReference type="GO" id="GO:0019843">
    <property type="term" value="F:rRNA binding"/>
    <property type="evidence" value="ECO:0007669"/>
    <property type="project" value="UniProtKB-UniRule"/>
</dbReference>
<dbReference type="GO" id="GO:0003735">
    <property type="term" value="F:structural constituent of ribosome"/>
    <property type="evidence" value="ECO:0007669"/>
    <property type="project" value="InterPro"/>
</dbReference>
<dbReference type="GO" id="GO:0006412">
    <property type="term" value="P:translation"/>
    <property type="evidence" value="ECO:0007669"/>
    <property type="project" value="UniProtKB-UniRule"/>
</dbReference>
<dbReference type="CDD" id="cd00353">
    <property type="entry name" value="Ribosomal_S15p_S13e"/>
    <property type="match status" value="1"/>
</dbReference>
<dbReference type="FunFam" id="1.10.287.10:FF:000002">
    <property type="entry name" value="30S ribosomal protein S15"/>
    <property type="match status" value="1"/>
</dbReference>
<dbReference type="Gene3D" id="6.10.250.3130">
    <property type="match status" value="1"/>
</dbReference>
<dbReference type="Gene3D" id="1.10.287.10">
    <property type="entry name" value="S15/NS1, RNA-binding"/>
    <property type="match status" value="1"/>
</dbReference>
<dbReference type="HAMAP" id="MF_01343_B">
    <property type="entry name" value="Ribosomal_uS15_B"/>
    <property type="match status" value="1"/>
</dbReference>
<dbReference type="InterPro" id="IPR000589">
    <property type="entry name" value="Ribosomal_uS15"/>
</dbReference>
<dbReference type="InterPro" id="IPR005290">
    <property type="entry name" value="Ribosomal_uS15_bac-type"/>
</dbReference>
<dbReference type="InterPro" id="IPR009068">
    <property type="entry name" value="uS15_NS1_RNA-bd_sf"/>
</dbReference>
<dbReference type="NCBIfam" id="TIGR00952">
    <property type="entry name" value="S15_bact"/>
    <property type="match status" value="1"/>
</dbReference>
<dbReference type="PANTHER" id="PTHR23321">
    <property type="entry name" value="RIBOSOMAL PROTEIN S15, BACTERIAL AND ORGANELLAR"/>
    <property type="match status" value="1"/>
</dbReference>
<dbReference type="PANTHER" id="PTHR23321:SF26">
    <property type="entry name" value="SMALL RIBOSOMAL SUBUNIT PROTEIN US15M"/>
    <property type="match status" value="1"/>
</dbReference>
<dbReference type="Pfam" id="PF00312">
    <property type="entry name" value="Ribosomal_S15"/>
    <property type="match status" value="1"/>
</dbReference>
<dbReference type="SMART" id="SM01387">
    <property type="entry name" value="Ribosomal_S15"/>
    <property type="match status" value="1"/>
</dbReference>
<dbReference type="SUPFAM" id="SSF47060">
    <property type="entry name" value="S15/NS1 RNA-binding domain"/>
    <property type="match status" value="1"/>
</dbReference>
<dbReference type="PROSITE" id="PS00362">
    <property type="entry name" value="RIBOSOMAL_S15"/>
    <property type="match status" value="1"/>
</dbReference>
<reference key="1">
    <citation type="journal article" date="2004" name="Proc. Natl. Acad. Sci. U.S.A.">
        <title>The genome sequence of the probiotic intestinal bacterium Lactobacillus johnsonii NCC 533.</title>
        <authorList>
            <person name="Pridmore R.D."/>
            <person name="Berger B."/>
            <person name="Desiere F."/>
            <person name="Vilanova D."/>
            <person name="Barretto C."/>
            <person name="Pittet A.-C."/>
            <person name="Zwahlen M.-C."/>
            <person name="Rouvet M."/>
            <person name="Altermann E."/>
            <person name="Barrangou R."/>
            <person name="Mollet B."/>
            <person name="Mercenier A."/>
            <person name="Klaenhammer T."/>
            <person name="Arigoni F."/>
            <person name="Schell M.A."/>
        </authorList>
    </citation>
    <scope>NUCLEOTIDE SEQUENCE [LARGE SCALE GENOMIC DNA]</scope>
    <source>
        <strain>CNCM I-1225 / La1 / NCC 533</strain>
    </source>
</reference>
<reference key="2">
    <citation type="journal article" date="2003" name="Appl. Environ. Microbiol.">
        <title>Analysis, characterization, and loci of the tuf genes in lactobacillus and bifidobacterium species and their direct application for species identification.</title>
        <authorList>
            <person name="Ventura M."/>
            <person name="Canchaya C."/>
            <person name="Meylan V."/>
            <person name="Klaenhammer T.R."/>
            <person name="Zink R."/>
        </authorList>
    </citation>
    <scope>NUCLEOTIDE SEQUENCE [GENOMIC DNA]</scope>
    <source>
        <strain>CNCM I-1225 / La1 / NCC 533</strain>
    </source>
</reference>
<name>RS15_LACJO</name>
<organism>
    <name type="scientific">Lactobacillus johnsonii (strain CNCM I-12250 / La1 / NCC 533)</name>
    <dbReference type="NCBI Taxonomy" id="257314"/>
    <lineage>
        <taxon>Bacteria</taxon>
        <taxon>Bacillati</taxon>
        <taxon>Bacillota</taxon>
        <taxon>Bacilli</taxon>
        <taxon>Lactobacillales</taxon>
        <taxon>Lactobacillaceae</taxon>
        <taxon>Lactobacillus</taxon>
    </lineage>
</organism>
<gene>
    <name evidence="1" type="primary">rpsO</name>
    <name type="ordered locus">LJ_1006</name>
</gene>
<keyword id="KW-0687">Ribonucleoprotein</keyword>
<keyword id="KW-0689">Ribosomal protein</keyword>
<keyword id="KW-0694">RNA-binding</keyword>
<keyword id="KW-0699">rRNA-binding</keyword>
<feature type="chain" id="PRO_0000115453" description="Small ribosomal subunit protein uS15">
    <location>
        <begin position="1"/>
        <end position="89"/>
    </location>
</feature>
<accession>Q74JU9</accession>
<accession>Q6UE13</accession>
<sequence length="89" mass="10460">MAISKEKKDELIKEYARHDGDTGSPEVQIALLTSDINNLNDHLKANKQDHHSYVGLLKKIGHRRNLLRYLKNKDIQRYRELINKLGLRR</sequence>
<proteinExistence type="inferred from homology"/>
<comment type="function">
    <text evidence="1">One of the primary rRNA binding proteins, it binds directly to 16S rRNA where it helps nucleate assembly of the platform of the 30S subunit by binding and bridging several RNA helices of the 16S rRNA.</text>
</comment>
<comment type="function">
    <text evidence="1">Forms an intersubunit bridge (bridge B4) with the 23S rRNA of the 50S subunit in the ribosome.</text>
</comment>
<comment type="subunit">
    <text evidence="1">Part of the 30S ribosomal subunit. Forms a bridge to the 50S subunit in the 70S ribosome, contacting the 23S rRNA.</text>
</comment>
<comment type="similarity">
    <text evidence="1">Belongs to the universal ribosomal protein uS15 family.</text>
</comment>
<evidence type="ECO:0000255" key="1">
    <source>
        <dbReference type="HAMAP-Rule" id="MF_01343"/>
    </source>
</evidence>
<evidence type="ECO:0000305" key="2"/>